<sequence length="214" mass="22748">MHMAIGLVGRKCGMTRIFTDAGVSVPVTVIEVDPNRITQIKTLETDGYQAVQVTTGERRESRVTNAQKGHFAKAGVAAGRLVKEFRVTEAELEGREVGGTIGVDLFTVGQIVDVTGQSKGKGFQGGVKRWNFRTQDATHGNSVSHRVLGSTGQNQTPGRVFKGKKMAGHLGDERVTVQGLEIVSVDTERSVLVVKGAIPGATGGDVIVRPTIKA</sequence>
<reference key="1">
    <citation type="journal article" date="2008" name="Antimicrob. Agents Chemother.">
        <title>Whole-genome pyrosequencing of an epidemic multidrug-resistant Acinetobacter baumannii strain belonging to the European clone II group.</title>
        <authorList>
            <person name="Iacono M."/>
            <person name="Villa L."/>
            <person name="Fortini D."/>
            <person name="Bordoni R."/>
            <person name="Imperi F."/>
            <person name="Bonnal R.J."/>
            <person name="Sicheritz-Ponten T."/>
            <person name="De Bellis G."/>
            <person name="Visca P."/>
            <person name="Cassone A."/>
            <person name="Carattoli A."/>
        </authorList>
    </citation>
    <scope>NUCLEOTIDE SEQUENCE [LARGE SCALE GENOMIC DNA]</scope>
    <source>
        <strain>ACICU</strain>
    </source>
</reference>
<keyword id="KW-0488">Methylation</keyword>
<keyword id="KW-0687">Ribonucleoprotein</keyword>
<keyword id="KW-0689">Ribosomal protein</keyword>
<keyword id="KW-0694">RNA-binding</keyword>
<keyword id="KW-0699">rRNA-binding</keyword>
<comment type="function">
    <text evidence="1">One of the primary rRNA binding proteins, it binds directly near the 3'-end of the 23S rRNA, where it nucleates assembly of the 50S subunit.</text>
</comment>
<comment type="subunit">
    <text evidence="1">Part of the 50S ribosomal subunit. Forms a cluster with proteins L14 and L19.</text>
</comment>
<comment type="PTM">
    <text evidence="1">Methylated by PrmB.</text>
</comment>
<comment type="similarity">
    <text evidence="1">Belongs to the universal ribosomal protein uL3 family.</text>
</comment>
<name>RL3_ACIBC</name>
<evidence type="ECO:0000255" key="1">
    <source>
        <dbReference type="HAMAP-Rule" id="MF_01325"/>
    </source>
</evidence>
<evidence type="ECO:0000305" key="2"/>
<feature type="chain" id="PRO_0000353591" description="Large ribosomal subunit protein uL3">
    <location>
        <begin position="1"/>
        <end position="214"/>
    </location>
</feature>
<feature type="modified residue" description="N5-methylglutamine" evidence="1">
    <location>
        <position position="155"/>
    </location>
</feature>
<proteinExistence type="inferred from homology"/>
<accession>B2HZM2</accession>
<gene>
    <name evidence="1" type="primary">rplC</name>
    <name type="ordered locus">ACICU_03280</name>
</gene>
<protein>
    <recommendedName>
        <fullName evidence="1">Large ribosomal subunit protein uL3</fullName>
    </recommendedName>
    <alternativeName>
        <fullName evidence="2">50S ribosomal protein L3</fullName>
    </alternativeName>
</protein>
<organism>
    <name type="scientific">Acinetobacter baumannii (strain ACICU)</name>
    <dbReference type="NCBI Taxonomy" id="405416"/>
    <lineage>
        <taxon>Bacteria</taxon>
        <taxon>Pseudomonadati</taxon>
        <taxon>Pseudomonadota</taxon>
        <taxon>Gammaproteobacteria</taxon>
        <taxon>Moraxellales</taxon>
        <taxon>Moraxellaceae</taxon>
        <taxon>Acinetobacter</taxon>
        <taxon>Acinetobacter calcoaceticus/baumannii complex</taxon>
    </lineage>
</organism>
<dbReference type="EMBL" id="CP000863">
    <property type="protein sequence ID" value="ACC58590.1"/>
    <property type="molecule type" value="Genomic_DNA"/>
</dbReference>
<dbReference type="SMR" id="B2HZM2"/>
<dbReference type="KEGG" id="abc:ACICU_03280"/>
<dbReference type="HOGENOM" id="CLU_044142_4_1_6"/>
<dbReference type="Proteomes" id="UP000008839">
    <property type="component" value="Chromosome"/>
</dbReference>
<dbReference type="GO" id="GO:0022625">
    <property type="term" value="C:cytosolic large ribosomal subunit"/>
    <property type="evidence" value="ECO:0007669"/>
    <property type="project" value="TreeGrafter"/>
</dbReference>
<dbReference type="GO" id="GO:0019843">
    <property type="term" value="F:rRNA binding"/>
    <property type="evidence" value="ECO:0007669"/>
    <property type="project" value="UniProtKB-UniRule"/>
</dbReference>
<dbReference type="GO" id="GO:0003735">
    <property type="term" value="F:structural constituent of ribosome"/>
    <property type="evidence" value="ECO:0007669"/>
    <property type="project" value="InterPro"/>
</dbReference>
<dbReference type="GO" id="GO:0006412">
    <property type="term" value="P:translation"/>
    <property type="evidence" value="ECO:0007669"/>
    <property type="project" value="UniProtKB-UniRule"/>
</dbReference>
<dbReference type="FunFam" id="2.40.30.10:FF:000004">
    <property type="entry name" value="50S ribosomal protein L3"/>
    <property type="match status" value="1"/>
</dbReference>
<dbReference type="FunFam" id="3.30.160.810:FF:000001">
    <property type="entry name" value="50S ribosomal protein L3"/>
    <property type="match status" value="1"/>
</dbReference>
<dbReference type="Gene3D" id="3.30.160.810">
    <property type="match status" value="1"/>
</dbReference>
<dbReference type="Gene3D" id="2.40.30.10">
    <property type="entry name" value="Translation factors"/>
    <property type="match status" value="1"/>
</dbReference>
<dbReference type="HAMAP" id="MF_01325_B">
    <property type="entry name" value="Ribosomal_uL3_B"/>
    <property type="match status" value="1"/>
</dbReference>
<dbReference type="InterPro" id="IPR000597">
    <property type="entry name" value="Ribosomal_uL3"/>
</dbReference>
<dbReference type="InterPro" id="IPR019927">
    <property type="entry name" value="Ribosomal_uL3_bac/org-type"/>
</dbReference>
<dbReference type="InterPro" id="IPR019926">
    <property type="entry name" value="Ribosomal_uL3_CS"/>
</dbReference>
<dbReference type="InterPro" id="IPR009000">
    <property type="entry name" value="Transl_B-barrel_sf"/>
</dbReference>
<dbReference type="NCBIfam" id="TIGR03625">
    <property type="entry name" value="L3_bact"/>
    <property type="match status" value="1"/>
</dbReference>
<dbReference type="PANTHER" id="PTHR11229">
    <property type="entry name" value="50S RIBOSOMAL PROTEIN L3"/>
    <property type="match status" value="1"/>
</dbReference>
<dbReference type="PANTHER" id="PTHR11229:SF16">
    <property type="entry name" value="LARGE RIBOSOMAL SUBUNIT PROTEIN UL3C"/>
    <property type="match status" value="1"/>
</dbReference>
<dbReference type="Pfam" id="PF00297">
    <property type="entry name" value="Ribosomal_L3"/>
    <property type="match status" value="1"/>
</dbReference>
<dbReference type="SUPFAM" id="SSF50447">
    <property type="entry name" value="Translation proteins"/>
    <property type="match status" value="1"/>
</dbReference>
<dbReference type="PROSITE" id="PS00474">
    <property type="entry name" value="RIBOSOMAL_L3"/>
    <property type="match status" value="1"/>
</dbReference>